<feature type="chain" id="PRO_0000231302" description="UDP-N-acetylglucosamine 1-carboxyvinyltransferase">
    <location>
        <begin position="1"/>
        <end position="424"/>
    </location>
</feature>
<feature type="active site" description="Proton donor" evidence="1">
    <location>
        <position position="122"/>
    </location>
</feature>
<feature type="binding site" evidence="1">
    <location>
        <begin position="22"/>
        <end position="23"/>
    </location>
    <ligand>
        <name>phosphoenolpyruvate</name>
        <dbReference type="ChEBI" id="CHEBI:58702"/>
    </ligand>
</feature>
<feature type="binding site" evidence="1">
    <location>
        <position position="98"/>
    </location>
    <ligand>
        <name>UDP-N-acetyl-alpha-D-glucosamine</name>
        <dbReference type="ChEBI" id="CHEBI:57705"/>
    </ligand>
</feature>
<feature type="binding site" evidence="1">
    <location>
        <begin position="127"/>
        <end position="131"/>
    </location>
    <ligand>
        <name>UDP-N-acetyl-alpha-D-glucosamine</name>
        <dbReference type="ChEBI" id="CHEBI:57705"/>
    </ligand>
</feature>
<feature type="binding site" evidence="1">
    <location>
        <position position="312"/>
    </location>
    <ligand>
        <name>UDP-N-acetyl-alpha-D-glucosamine</name>
        <dbReference type="ChEBI" id="CHEBI:57705"/>
    </ligand>
</feature>
<feature type="binding site" evidence="1">
    <location>
        <position position="334"/>
    </location>
    <ligand>
        <name>UDP-N-acetyl-alpha-D-glucosamine</name>
        <dbReference type="ChEBI" id="CHEBI:57705"/>
    </ligand>
</feature>
<feature type="modified residue" description="2-(S-cysteinyl)pyruvic acid O-phosphothioketal" evidence="1">
    <location>
        <position position="122"/>
    </location>
</feature>
<dbReference type="EC" id="2.5.1.7" evidence="1"/>
<dbReference type="EMBL" id="AM039952">
    <property type="protein sequence ID" value="CAJ24841.1"/>
    <property type="molecule type" value="Genomic_DNA"/>
</dbReference>
<dbReference type="RefSeq" id="WP_011348143.1">
    <property type="nucleotide sequence ID" value="NZ_CP017190.1"/>
</dbReference>
<dbReference type="SMR" id="Q3BQX2"/>
<dbReference type="STRING" id="456327.BJD11_07270"/>
<dbReference type="KEGG" id="xcv:XCV3110"/>
<dbReference type="eggNOG" id="COG0766">
    <property type="taxonomic scope" value="Bacteria"/>
</dbReference>
<dbReference type="HOGENOM" id="CLU_027387_0_0_6"/>
<dbReference type="UniPathway" id="UPA00219"/>
<dbReference type="Proteomes" id="UP000007069">
    <property type="component" value="Chromosome"/>
</dbReference>
<dbReference type="GO" id="GO:0005737">
    <property type="term" value="C:cytoplasm"/>
    <property type="evidence" value="ECO:0007669"/>
    <property type="project" value="UniProtKB-SubCell"/>
</dbReference>
<dbReference type="GO" id="GO:0008760">
    <property type="term" value="F:UDP-N-acetylglucosamine 1-carboxyvinyltransferase activity"/>
    <property type="evidence" value="ECO:0007669"/>
    <property type="project" value="UniProtKB-UniRule"/>
</dbReference>
<dbReference type="GO" id="GO:0051301">
    <property type="term" value="P:cell division"/>
    <property type="evidence" value="ECO:0007669"/>
    <property type="project" value="UniProtKB-KW"/>
</dbReference>
<dbReference type="GO" id="GO:0071555">
    <property type="term" value="P:cell wall organization"/>
    <property type="evidence" value="ECO:0007669"/>
    <property type="project" value="UniProtKB-KW"/>
</dbReference>
<dbReference type="GO" id="GO:0009252">
    <property type="term" value="P:peptidoglycan biosynthetic process"/>
    <property type="evidence" value="ECO:0007669"/>
    <property type="project" value="UniProtKB-UniRule"/>
</dbReference>
<dbReference type="GO" id="GO:0008360">
    <property type="term" value="P:regulation of cell shape"/>
    <property type="evidence" value="ECO:0007669"/>
    <property type="project" value="UniProtKB-KW"/>
</dbReference>
<dbReference type="GO" id="GO:0019277">
    <property type="term" value="P:UDP-N-acetylgalactosamine biosynthetic process"/>
    <property type="evidence" value="ECO:0007669"/>
    <property type="project" value="InterPro"/>
</dbReference>
<dbReference type="CDD" id="cd01555">
    <property type="entry name" value="UdpNAET"/>
    <property type="match status" value="1"/>
</dbReference>
<dbReference type="FunFam" id="3.65.10.10:FF:000002">
    <property type="entry name" value="UDP-N-acetylglucosamine 1-carboxyvinyltransferase"/>
    <property type="match status" value="1"/>
</dbReference>
<dbReference type="Gene3D" id="3.65.10.10">
    <property type="entry name" value="Enolpyruvate transferase domain"/>
    <property type="match status" value="2"/>
</dbReference>
<dbReference type="HAMAP" id="MF_00111">
    <property type="entry name" value="MurA"/>
    <property type="match status" value="1"/>
</dbReference>
<dbReference type="InterPro" id="IPR001986">
    <property type="entry name" value="Enolpyruvate_Tfrase_dom"/>
</dbReference>
<dbReference type="InterPro" id="IPR036968">
    <property type="entry name" value="Enolpyruvate_Tfrase_sf"/>
</dbReference>
<dbReference type="InterPro" id="IPR050068">
    <property type="entry name" value="MurA_subfamily"/>
</dbReference>
<dbReference type="InterPro" id="IPR013792">
    <property type="entry name" value="RNA3'P_cycl/enolpyr_Trfase_a/b"/>
</dbReference>
<dbReference type="InterPro" id="IPR005750">
    <property type="entry name" value="UDP_GlcNAc_COvinyl_MurA"/>
</dbReference>
<dbReference type="NCBIfam" id="TIGR01072">
    <property type="entry name" value="murA"/>
    <property type="match status" value="1"/>
</dbReference>
<dbReference type="NCBIfam" id="NF006873">
    <property type="entry name" value="PRK09369.1"/>
    <property type="match status" value="1"/>
</dbReference>
<dbReference type="PANTHER" id="PTHR43783">
    <property type="entry name" value="UDP-N-ACETYLGLUCOSAMINE 1-CARBOXYVINYLTRANSFERASE"/>
    <property type="match status" value="1"/>
</dbReference>
<dbReference type="PANTHER" id="PTHR43783:SF1">
    <property type="entry name" value="UDP-N-ACETYLGLUCOSAMINE 1-CARBOXYVINYLTRANSFERASE"/>
    <property type="match status" value="1"/>
</dbReference>
<dbReference type="Pfam" id="PF00275">
    <property type="entry name" value="EPSP_synthase"/>
    <property type="match status" value="1"/>
</dbReference>
<dbReference type="SUPFAM" id="SSF55205">
    <property type="entry name" value="EPT/RTPC-like"/>
    <property type="match status" value="1"/>
</dbReference>
<proteinExistence type="inferred from homology"/>
<keyword id="KW-0131">Cell cycle</keyword>
<keyword id="KW-0132">Cell division</keyword>
<keyword id="KW-0133">Cell shape</keyword>
<keyword id="KW-0961">Cell wall biogenesis/degradation</keyword>
<keyword id="KW-0963">Cytoplasm</keyword>
<keyword id="KW-0573">Peptidoglycan synthesis</keyword>
<keyword id="KW-0670">Pyruvate</keyword>
<keyword id="KW-0808">Transferase</keyword>
<protein>
    <recommendedName>
        <fullName evidence="1">UDP-N-acetylglucosamine 1-carboxyvinyltransferase</fullName>
        <ecNumber evidence="1">2.5.1.7</ecNumber>
    </recommendedName>
    <alternativeName>
        <fullName evidence="1">Enoylpyruvate transferase</fullName>
    </alternativeName>
    <alternativeName>
        <fullName evidence="1">UDP-N-acetylglucosamine enolpyruvyl transferase</fullName>
        <shortName evidence="1">EPT</shortName>
    </alternativeName>
</protein>
<name>MURA_XANE5</name>
<organism>
    <name type="scientific">Xanthomonas euvesicatoria pv. vesicatoria (strain 85-10)</name>
    <name type="common">Xanthomonas campestris pv. vesicatoria</name>
    <dbReference type="NCBI Taxonomy" id="316273"/>
    <lineage>
        <taxon>Bacteria</taxon>
        <taxon>Pseudomonadati</taxon>
        <taxon>Pseudomonadota</taxon>
        <taxon>Gammaproteobacteria</taxon>
        <taxon>Lysobacterales</taxon>
        <taxon>Lysobacteraceae</taxon>
        <taxon>Xanthomonas</taxon>
    </lineage>
</organism>
<accession>Q3BQX2</accession>
<evidence type="ECO:0000255" key="1">
    <source>
        <dbReference type="HAMAP-Rule" id="MF_00111"/>
    </source>
</evidence>
<comment type="function">
    <text evidence="1">Cell wall formation. Adds enolpyruvyl to UDP-N-acetylglucosamine.</text>
</comment>
<comment type="catalytic activity">
    <reaction evidence="1">
        <text>phosphoenolpyruvate + UDP-N-acetyl-alpha-D-glucosamine = UDP-N-acetyl-3-O-(1-carboxyvinyl)-alpha-D-glucosamine + phosphate</text>
        <dbReference type="Rhea" id="RHEA:18681"/>
        <dbReference type="ChEBI" id="CHEBI:43474"/>
        <dbReference type="ChEBI" id="CHEBI:57705"/>
        <dbReference type="ChEBI" id="CHEBI:58702"/>
        <dbReference type="ChEBI" id="CHEBI:68483"/>
        <dbReference type="EC" id="2.5.1.7"/>
    </reaction>
</comment>
<comment type="pathway">
    <text evidence="1">Cell wall biogenesis; peptidoglycan biosynthesis.</text>
</comment>
<comment type="subcellular location">
    <subcellularLocation>
        <location evidence="1">Cytoplasm</location>
    </subcellularLocation>
</comment>
<comment type="similarity">
    <text evidence="1">Belongs to the EPSP synthase family. MurA subfamily.</text>
</comment>
<sequence>MAKIVVTGGQALHGEVNISGAKNAVLPILCATLLADAPVEISNVPHLHDVITTVKLLSELGAEVTIDEGTLAKGRSILVDPRSVTHQVAPYELVKTMRASILVLGPLLARYGTAEVSLPGGCAIGSRPVDQHIKGLQALGADISVENGYIKATSHGRLKGGRYVFDMVSVTGTENVLMAAVLAEGTTVLENAAMEPEVTDLADCLIALGAQIEGAGTPRIVVQGVERLGGGHHAVLPDRIETGTFLVAAAMTGGSVTVRRARPETLDAVLDKLTEAGATITTTADSITLDMQGKRPRAVSLTTAPYPAFPTDMQAQFMALNCVADGVGVINETIFENRFMHVNELLRLGADIQVEGHTAIVRGAERLSGAPVMATDLRASASLILAGLVADGDTTIDRIYHLDRGYENIEEKLGALGATIQRTA</sequence>
<gene>
    <name evidence="1" type="primary">murA</name>
    <name type="ordered locus">XCV3110</name>
</gene>
<reference key="1">
    <citation type="journal article" date="2005" name="J. Bacteriol.">
        <title>Insights into genome plasticity and pathogenicity of the plant pathogenic Bacterium Xanthomonas campestris pv. vesicatoria revealed by the complete genome sequence.</title>
        <authorList>
            <person name="Thieme F."/>
            <person name="Koebnik R."/>
            <person name="Bekel T."/>
            <person name="Berger C."/>
            <person name="Boch J."/>
            <person name="Buettner D."/>
            <person name="Caldana C."/>
            <person name="Gaigalat L."/>
            <person name="Goesmann A."/>
            <person name="Kay S."/>
            <person name="Kirchner O."/>
            <person name="Lanz C."/>
            <person name="Linke B."/>
            <person name="McHardy A.C."/>
            <person name="Meyer F."/>
            <person name="Mittenhuber G."/>
            <person name="Nies D.H."/>
            <person name="Niesbach-Kloesgen U."/>
            <person name="Patschkowski T."/>
            <person name="Rueckert C."/>
            <person name="Rupp O."/>
            <person name="Schneiker S."/>
            <person name="Schuster S.C."/>
            <person name="Vorhoelter F.J."/>
            <person name="Weber E."/>
            <person name="Puehler A."/>
            <person name="Bonas U."/>
            <person name="Bartels D."/>
            <person name="Kaiser O."/>
        </authorList>
    </citation>
    <scope>NUCLEOTIDE SEQUENCE [LARGE SCALE GENOMIC DNA]</scope>
    <source>
        <strain>85-10</strain>
    </source>
</reference>